<sequence>MNDERLVAINFEQQIFSKISEISESVGRAIRYCKEDGKVEGCETASHVDFLNHIHLLLGNYNNDLASSIEKKKSELIVRNSEGLPVMDIHEEVDKDGNIISASVAPQRISSVIDYADVFRSLPGFKNIENGGNRDTSSRIEELSEEEINDSTKNINYKAPEMGSLPSNTEFTSTPTLGVSEFPSKHGDHSDSKTYESPISNSQAASLSDSDMVQQIKNGSKTSLFKKGFLFKKNNAMQNRTTSNIKSNASAIEKNKETILNALNNSTLNENGHQDTQNEVLRDIVLEHPTAKAQDTGESNKDNNTSTSKHKKRPKRLSKFKQAKLETKKSGNKDHATSSEKLSLGNESIHSINETRSSSIEEPDNADNKIVEEEPMLLPVPTTAQGQNVLEAVQYDGLDSLEDMEALIQEMEEEGELDDNSESEEDEHGMTIGFSKELKAPPDPQYFTEKTGATTYVNGNDESLNVSDFPQIVEQEELSSKNPRKVHFSDTLEIKHVSRSGKANIEVIPAPTEEYDNLFGPDDFQSRISAFRKARSKLRAKENEEGNHSNATCTIKNDDLSNTLNNRAANTKLNPKEEDKSTVESELKAPPKEKSSETSKEYLNEPSVVKDFVVERTPSDKISESKEAFDAKVEEISDQRAISQRYYELRKKMIDNTGEYIKDEEEQAVIPLDENGNEKPKMSRFMTARLRGRVPIYEH</sequence>
<evidence type="ECO:0000256" key="1">
    <source>
        <dbReference type="SAM" id="MobiDB-lite"/>
    </source>
</evidence>
<evidence type="ECO:0000269" key="2">
    <source>
    </source>
</evidence>
<gene>
    <name type="ORF">SPCC736.07c</name>
</gene>
<reference key="1">
    <citation type="journal article" date="2002" name="Nature">
        <title>The genome sequence of Schizosaccharomyces pombe.</title>
        <authorList>
            <person name="Wood V."/>
            <person name="Gwilliam R."/>
            <person name="Rajandream M.A."/>
            <person name="Lyne M.H."/>
            <person name="Lyne R."/>
            <person name="Stewart A."/>
            <person name="Sgouros J.G."/>
            <person name="Peat N."/>
            <person name="Hayles J."/>
            <person name="Baker S.G."/>
            <person name="Basham D."/>
            <person name="Bowman S."/>
            <person name="Brooks K."/>
            <person name="Brown D."/>
            <person name="Brown S."/>
            <person name="Chillingworth T."/>
            <person name="Churcher C.M."/>
            <person name="Collins M."/>
            <person name="Connor R."/>
            <person name="Cronin A."/>
            <person name="Davis P."/>
            <person name="Feltwell T."/>
            <person name="Fraser A."/>
            <person name="Gentles S."/>
            <person name="Goble A."/>
            <person name="Hamlin N."/>
            <person name="Harris D.E."/>
            <person name="Hidalgo J."/>
            <person name="Hodgson G."/>
            <person name="Holroyd S."/>
            <person name="Hornsby T."/>
            <person name="Howarth S."/>
            <person name="Huckle E.J."/>
            <person name="Hunt S."/>
            <person name="Jagels K."/>
            <person name="James K.D."/>
            <person name="Jones L."/>
            <person name="Jones M."/>
            <person name="Leather S."/>
            <person name="McDonald S."/>
            <person name="McLean J."/>
            <person name="Mooney P."/>
            <person name="Moule S."/>
            <person name="Mungall K.L."/>
            <person name="Murphy L.D."/>
            <person name="Niblett D."/>
            <person name="Odell C."/>
            <person name="Oliver K."/>
            <person name="O'Neil S."/>
            <person name="Pearson D."/>
            <person name="Quail M.A."/>
            <person name="Rabbinowitsch E."/>
            <person name="Rutherford K.M."/>
            <person name="Rutter S."/>
            <person name="Saunders D."/>
            <person name="Seeger K."/>
            <person name="Sharp S."/>
            <person name="Skelton J."/>
            <person name="Simmonds M.N."/>
            <person name="Squares R."/>
            <person name="Squares S."/>
            <person name="Stevens K."/>
            <person name="Taylor K."/>
            <person name="Taylor R.G."/>
            <person name="Tivey A."/>
            <person name="Walsh S.V."/>
            <person name="Warren T."/>
            <person name="Whitehead S."/>
            <person name="Woodward J.R."/>
            <person name="Volckaert G."/>
            <person name="Aert R."/>
            <person name="Robben J."/>
            <person name="Grymonprez B."/>
            <person name="Weltjens I."/>
            <person name="Vanstreels E."/>
            <person name="Rieger M."/>
            <person name="Schaefer M."/>
            <person name="Mueller-Auer S."/>
            <person name="Gabel C."/>
            <person name="Fuchs M."/>
            <person name="Duesterhoeft A."/>
            <person name="Fritzc C."/>
            <person name="Holzer E."/>
            <person name="Moestl D."/>
            <person name="Hilbert H."/>
            <person name="Borzym K."/>
            <person name="Langer I."/>
            <person name="Beck A."/>
            <person name="Lehrach H."/>
            <person name="Reinhardt R."/>
            <person name="Pohl T.M."/>
            <person name="Eger P."/>
            <person name="Zimmermann W."/>
            <person name="Wedler H."/>
            <person name="Wambutt R."/>
            <person name="Purnelle B."/>
            <person name="Goffeau A."/>
            <person name="Cadieu E."/>
            <person name="Dreano S."/>
            <person name="Gloux S."/>
            <person name="Lelaure V."/>
            <person name="Mottier S."/>
            <person name="Galibert F."/>
            <person name="Aves S.J."/>
            <person name="Xiang Z."/>
            <person name="Hunt C."/>
            <person name="Moore K."/>
            <person name="Hurst S.M."/>
            <person name="Lucas M."/>
            <person name="Rochet M."/>
            <person name="Gaillardin C."/>
            <person name="Tallada V.A."/>
            <person name="Garzon A."/>
            <person name="Thode G."/>
            <person name="Daga R.R."/>
            <person name="Cruzado L."/>
            <person name="Jimenez J."/>
            <person name="Sanchez M."/>
            <person name="del Rey F."/>
            <person name="Benito J."/>
            <person name="Dominguez A."/>
            <person name="Revuelta J.L."/>
            <person name="Moreno S."/>
            <person name="Armstrong J."/>
            <person name="Forsburg S.L."/>
            <person name="Cerutti L."/>
            <person name="Lowe T."/>
            <person name="McCombie W.R."/>
            <person name="Paulsen I."/>
            <person name="Potashkin J."/>
            <person name="Shpakovski G.V."/>
            <person name="Ussery D."/>
            <person name="Barrell B.G."/>
            <person name="Nurse P."/>
        </authorList>
    </citation>
    <scope>NUCLEOTIDE SEQUENCE [LARGE SCALE GENOMIC DNA]</scope>
    <source>
        <strain>972 / ATCC 24843</strain>
    </source>
</reference>
<reference key="2">
    <citation type="journal article" date="2006" name="Nat. Biotechnol.">
        <title>ORFeome cloning and global analysis of protein localization in the fission yeast Schizosaccharomyces pombe.</title>
        <authorList>
            <person name="Matsuyama A."/>
            <person name="Arai R."/>
            <person name="Yashiroda Y."/>
            <person name="Shirai A."/>
            <person name="Kamata A."/>
            <person name="Sekido S."/>
            <person name="Kobayashi Y."/>
            <person name="Hashimoto A."/>
            <person name="Hamamoto M."/>
            <person name="Hiraoka Y."/>
            <person name="Horinouchi S."/>
            <person name="Yoshida M."/>
        </authorList>
    </citation>
    <scope>SUBCELLULAR LOCATION [LARGE SCALE ANALYSIS]</scope>
</reference>
<comment type="subcellular location">
    <subcellularLocation>
        <location evidence="2">Cytoplasm</location>
    </subcellularLocation>
</comment>
<proteinExistence type="predicted"/>
<organism>
    <name type="scientific">Schizosaccharomyces pombe (strain 972 / ATCC 24843)</name>
    <name type="common">Fission yeast</name>
    <dbReference type="NCBI Taxonomy" id="284812"/>
    <lineage>
        <taxon>Eukaryota</taxon>
        <taxon>Fungi</taxon>
        <taxon>Dikarya</taxon>
        <taxon>Ascomycota</taxon>
        <taxon>Taphrinomycotina</taxon>
        <taxon>Schizosaccharomycetes</taxon>
        <taxon>Schizosaccharomycetales</taxon>
        <taxon>Schizosaccharomycetaceae</taxon>
        <taxon>Schizosaccharomyces</taxon>
    </lineage>
</organism>
<feature type="chain" id="PRO_0000372344" description="Uncharacterized protein C736.07c">
    <location>
        <begin position="1"/>
        <end position="699"/>
    </location>
</feature>
<feature type="region of interest" description="Disordered" evidence="1">
    <location>
        <begin position="175"/>
        <end position="208"/>
    </location>
</feature>
<feature type="region of interest" description="Disordered" evidence="1">
    <location>
        <begin position="289"/>
        <end position="364"/>
    </location>
</feature>
<feature type="region of interest" description="Disordered" evidence="1">
    <location>
        <begin position="539"/>
        <end position="603"/>
    </location>
</feature>
<feature type="compositionally biased region" description="Basic and acidic residues" evidence="1">
    <location>
        <begin position="183"/>
        <end position="194"/>
    </location>
</feature>
<feature type="compositionally biased region" description="Polar residues" evidence="1">
    <location>
        <begin position="195"/>
        <end position="208"/>
    </location>
</feature>
<feature type="compositionally biased region" description="Basic residues" evidence="1">
    <location>
        <begin position="308"/>
        <end position="322"/>
    </location>
</feature>
<feature type="compositionally biased region" description="Basic and acidic residues" evidence="1">
    <location>
        <begin position="323"/>
        <end position="338"/>
    </location>
</feature>
<feature type="compositionally biased region" description="Polar residues" evidence="1">
    <location>
        <begin position="339"/>
        <end position="360"/>
    </location>
</feature>
<feature type="compositionally biased region" description="Polar residues" evidence="1">
    <location>
        <begin position="548"/>
        <end position="573"/>
    </location>
</feature>
<feature type="compositionally biased region" description="Basic and acidic residues" evidence="1">
    <location>
        <begin position="574"/>
        <end position="603"/>
    </location>
</feature>
<name>YJC7_SCHPO</name>
<keyword id="KW-0963">Cytoplasm</keyword>
<keyword id="KW-1185">Reference proteome</keyword>
<protein>
    <recommendedName>
        <fullName>Uncharacterized protein C736.07c</fullName>
    </recommendedName>
</protein>
<accession>O74953</accession>
<dbReference type="EMBL" id="CU329672">
    <property type="protein sequence ID" value="CAA19271.1"/>
    <property type="molecule type" value="Genomic_DNA"/>
</dbReference>
<dbReference type="PIR" id="T41564">
    <property type="entry name" value="T41564"/>
</dbReference>
<dbReference type="SMR" id="O74953"/>
<dbReference type="BioGRID" id="275421">
    <property type="interactions" value="57"/>
</dbReference>
<dbReference type="FunCoup" id="O74953">
    <property type="interactions" value="72"/>
</dbReference>
<dbReference type="IntAct" id="O74953">
    <property type="interactions" value="1"/>
</dbReference>
<dbReference type="iPTMnet" id="O74953"/>
<dbReference type="PaxDb" id="4896-SPCC736.07c.1"/>
<dbReference type="EnsemblFungi" id="SPCC736.07c.1">
    <property type="protein sequence ID" value="SPCC736.07c.1:pep"/>
    <property type="gene ID" value="SPCC736.07c"/>
</dbReference>
<dbReference type="KEGG" id="spo:2538840"/>
<dbReference type="PomBase" id="SPCC736.07c"/>
<dbReference type="VEuPathDB" id="FungiDB:SPCC736.07c"/>
<dbReference type="HOGENOM" id="CLU_395451_0_0_1"/>
<dbReference type="InParanoid" id="O74953"/>
<dbReference type="OMA" id="LNARGMW"/>
<dbReference type="PRO" id="PR:O74953"/>
<dbReference type="Proteomes" id="UP000002485">
    <property type="component" value="Chromosome III"/>
</dbReference>
<dbReference type="GO" id="GO:0005829">
    <property type="term" value="C:cytosol"/>
    <property type="evidence" value="ECO:0007005"/>
    <property type="project" value="PomBase"/>
</dbReference>
<dbReference type="GO" id="GO:0001731">
    <property type="term" value="P:formation of translation preinitiation complex"/>
    <property type="evidence" value="ECO:0000266"/>
    <property type="project" value="PomBase"/>
</dbReference>
<dbReference type="GO" id="GO:1990113">
    <property type="term" value="P:RNA polymerase I assembly"/>
    <property type="evidence" value="ECO:0000266"/>
    <property type="project" value="PomBase"/>
</dbReference>
<dbReference type="GO" id="GO:1990114">
    <property type="term" value="P:RNA polymerase II core complex assembly"/>
    <property type="evidence" value="ECO:0000266"/>
    <property type="project" value="PomBase"/>
</dbReference>
<dbReference type="GO" id="GO:1990115">
    <property type="term" value="P:RNA polymerase III assembly"/>
    <property type="evidence" value="ECO:0000266"/>
    <property type="project" value="PomBase"/>
</dbReference>
<dbReference type="InterPro" id="IPR024325">
    <property type="entry name" value="DUF3835"/>
</dbReference>
<dbReference type="Pfam" id="PF12927">
    <property type="entry name" value="DUF3835"/>
    <property type="match status" value="2"/>
</dbReference>